<gene>
    <name evidence="1" type="primary">lysS</name>
    <name type="ordered locus">RPR_06035</name>
</gene>
<reference key="1">
    <citation type="journal article" date="2009" name="PLoS ONE">
        <title>Genome sequence of the endosymbiont Rickettsia peacockii and comparison with virulent Rickettsia rickettsii: identification of virulence factors.</title>
        <authorList>
            <person name="Felsheim R.F."/>
            <person name="Kurtti T.J."/>
            <person name="Munderloh U.G."/>
        </authorList>
    </citation>
    <scope>NUCLEOTIDE SEQUENCE [LARGE SCALE GENOMIC DNA]</scope>
    <source>
        <strain>Rustic</strain>
    </source>
</reference>
<protein>
    <recommendedName>
        <fullName evidence="1">Lysine--tRNA ligase</fullName>
        <ecNumber evidence="1">6.1.1.6</ecNumber>
    </recommendedName>
    <alternativeName>
        <fullName evidence="1">Lysyl-tRNA synthetase</fullName>
        <shortName evidence="1">LysRS</shortName>
    </alternativeName>
</protein>
<name>SYK_RICPU</name>
<keyword id="KW-0030">Aminoacyl-tRNA synthetase</keyword>
<keyword id="KW-0067">ATP-binding</keyword>
<keyword id="KW-0963">Cytoplasm</keyword>
<keyword id="KW-0436">Ligase</keyword>
<keyword id="KW-0547">Nucleotide-binding</keyword>
<keyword id="KW-0648">Protein biosynthesis</keyword>
<proteinExistence type="inferred from homology"/>
<dbReference type="EC" id="6.1.1.6" evidence="1"/>
<dbReference type="EMBL" id="CP001227">
    <property type="protein sequence ID" value="ACR47741.1"/>
    <property type="molecule type" value="Genomic_DNA"/>
</dbReference>
<dbReference type="RefSeq" id="WP_012736930.1">
    <property type="nucleotide sequence ID" value="NC_012730.1"/>
</dbReference>
<dbReference type="SMR" id="C4K2E4"/>
<dbReference type="KEGG" id="rpk:RPR_06035"/>
<dbReference type="HOGENOM" id="CLU_025562_2_0_5"/>
<dbReference type="Proteomes" id="UP000005015">
    <property type="component" value="Chromosome"/>
</dbReference>
<dbReference type="GO" id="GO:0005737">
    <property type="term" value="C:cytoplasm"/>
    <property type="evidence" value="ECO:0007669"/>
    <property type="project" value="UniProtKB-SubCell"/>
</dbReference>
<dbReference type="GO" id="GO:0005524">
    <property type="term" value="F:ATP binding"/>
    <property type="evidence" value="ECO:0007669"/>
    <property type="project" value="UniProtKB-UniRule"/>
</dbReference>
<dbReference type="GO" id="GO:0004824">
    <property type="term" value="F:lysine-tRNA ligase activity"/>
    <property type="evidence" value="ECO:0007669"/>
    <property type="project" value="UniProtKB-UniRule"/>
</dbReference>
<dbReference type="GO" id="GO:0000049">
    <property type="term" value="F:tRNA binding"/>
    <property type="evidence" value="ECO:0007669"/>
    <property type="project" value="InterPro"/>
</dbReference>
<dbReference type="GO" id="GO:0006430">
    <property type="term" value="P:lysyl-tRNA aminoacylation"/>
    <property type="evidence" value="ECO:0007669"/>
    <property type="project" value="UniProtKB-UniRule"/>
</dbReference>
<dbReference type="Gene3D" id="1.10.10.350">
    <property type="match status" value="1"/>
</dbReference>
<dbReference type="Gene3D" id="3.40.50.620">
    <property type="entry name" value="HUPs"/>
    <property type="match status" value="2"/>
</dbReference>
<dbReference type="HAMAP" id="MF_00177">
    <property type="entry name" value="Lys_tRNA_synth_class1"/>
    <property type="match status" value="1"/>
</dbReference>
<dbReference type="InterPro" id="IPR020751">
    <property type="entry name" value="aa-tRNA-synth_I_codon-bd_sub2"/>
</dbReference>
<dbReference type="InterPro" id="IPR001412">
    <property type="entry name" value="aa-tRNA-synth_I_CS"/>
</dbReference>
<dbReference type="InterPro" id="IPR008925">
    <property type="entry name" value="aa_tRNA-synth_I_cd-bd_sf"/>
</dbReference>
<dbReference type="InterPro" id="IPR002904">
    <property type="entry name" value="Lys-tRNA-ligase"/>
</dbReference>
<dbReference type="InterPro" id="IPR014729">
    <property type="entry name" value="Rossmann-like_a/b/a_fold"/>
</dbReference>
<dbReference type="NCBIfam" id="TIGR00467">
    <property type="entry name" value="lysS_arch"/>
    <property type="match status" value="1"/>
</dbReference>
<dbReference type="NCBIfam" id="NF001968">
    <property type="entry name" value="PRK00750.1-2"/>
    <property type="match status" value="1"/>
</dbReference>
<dbReference type="PANTHER" id="PTHR37940">
    <property type="entry name" value="LYSINE--TRNA LIGASE"/>
    <property type="match status" value="1"/>
</dbReference>
<dbReference type="PANTHER" id="PTHR37940:SF1">
    <property type="entry name" value="LYSINE--TRNA LIGASE"/>
    <property type="match status" value="1"/>
</dbReference>
<dbReference type="Pfam" id="PF01921">
    <property type="entry name" value="tRNA-synt_1f"/>
    <property type="match status" value="1"/>
</dbReference>
<dbReference type="SUPFAM" id="SSF48163">
    <property type="entry name" value="An anticodon-binding domain of class I aminoacyl-tRNA synthetases"/>
    <property type="match status" value="1"/>
</dbReference>
<dbReference type="SUPFAM" id="SSF52374">
    <property type="entry name" value="Nucleotidylyl transferase"/>
    <property type="match status" value="1"/>
</dbReference>
<dbReference type="PROSITE" id="PS00178">
    <property type="entry name" value="AA_TRNA_LIGASE_I"/>
    <property type="match status" value="1"/>
</dbReference>
<evidence type="ECO:0000255" key="1">
    <source>
        <dbReference type="HAMAP-Rule" id="MF_00177"/>
    </source>
</evidence>
<accession>C4K2E4</accession>
<comment type="catalytic activity">
    <reaction evidence="1">
        <text>tRNA(Lys) + L-lysine + ATP = L-lysyl-tRNA(Lys) + AMP + diphosphate</text>
        <dbReference type="Rhea" id="RHEA:20792"/>
        <dbReference type="Rhea" id="RHEA-COMP:9696"/>
        <dbReference type="Rhea" id="RHEA-COMP:9697"/>
        <dbReference type="ChEBI" id="CHEBI:30616"/>
        <dbReference type="ChEBI" id="CHEBI:32551"/>
        <dbReference type="ChEBI" id="CHEBI:33019"/>
        <dbReference type="ChEBI" id="CHEBI:78442"/>
        <dbReference type="ChEBI" id="CHEBI:78529"/>
        <dbReference type="ChEBI" id="CHEBI:456215"/>
        <dbReference type="EC" id="6.1.1.6"/>
    </reaction>
</comment>
<comment type="subcellular location">
    <subcellularLocation>
        <location evidence="1">Cytoplasm</location>
    </subcellularLocation>
</comment>
<comment type="similarity">
    <text evidence="1">Belongs to the class-I aminoacyl-tRNA synthetase family.</text>
</comment>
<sequence>MSEIWEDAIKSNAWPFVEAKKILDSLNGQIPEKGYVLFETGYGPSGLPHIGTFGENARMVMVQKAFEQLSDIPTKLICFSDDMDGLRTVPSNIPNPEMVAQYMDMPLTSIPDTFGECESYGHYMNAKLRSFLDKFGFEYAFYSSTNCYKAGMFDEMLIMVLEKYDEIMELMLPTFREERKATYSPFMPICPKTGKVLQVPIEKWDAKAGTVTYKDKAGNYIEVPVTGGHCKLQWKPDFGMRWAALKVDYEMYGKDHLANARLYSEICRILGGKPPVQLCYELFLDENGEKISKSKGNSISIDDWLKYAPVESMALFMYQNPTRAKRLFFDVIPKNVDEYITFNQKYHLEEDRAKRFANPVYHIHHGNVPKIETFGITYSLLLNLTSVCNPSDKSVLWGFISKYEPNATPNTNPYLDHLAEFAIRYYNDFIKAHKSYLSPSEKHKVILQDILDMLSDIADQTEAEAIQKAIYDIGMKAGYENLRDYFKDLYQILLGQNEGPRLGTFIKLYGVQEMKKLVEGQL</sequence>
<organism>
    <name type="scientific">Rickettsia peacockii (strain Rustic)</name>
    <dbReference type="NCBI Taxonomy" id="562019"/>
    <lineage>
        <taxon>Bacteria</taxon>
        <taxon>Pseudomonadati</taxon>
        <taxon>Pseudomonadota</taxon>
        <taxon>Alphaproteobacteria</taxon>
        <taxon>Rickettsiales</taxon>
        <taxon>Rickettsiaceae</taxon>
        <taxon>Rickettsieae</taxon>
        <taxon>Rickettsia</taxon>
        <taxon>spotted fever group</taxon>
    </lineage>
</organism>
<feature type="chain" id="PRO_1000203781" description="Lysine--tRNA ligase">
    <location>
        <begin position="1"/>
        <end position="522"/>
    </location>
</feature>
<feature type="short sequence motif" description="'HIGH' region">
    <location>
        <begin position="44"/>
        <end position="52"/>
    </location>
</feature>
<feature type="short sequence motif" description="'KMSKS' region">
    <location>
        <begin position="290"/>
        <end position="294"/>
    </location>
</feature>
<feature type="binding site" evidence="1">
    <location>
        <position position="293"/>
    </location>
    <ligand>
        <name>ATP</name>
        <dbReference type="ChEBI" id="CHEBI:30616"/>
    </ligand>
</feature>